<name>RL22_METEP</name>
<proteinExistence type="inferred from homology"/>
<organism>
    <name type="scientific">Methylorubrum extorquens (strain PA1)</name>
    <name type="common">Methylobacterium extorquens</name>
    <dbReference type="NCBI Taxonomy" id="419610"/>
    <lineage>
        <taxon>Bacteria</taxon>
        <taxon>Pseudomonadati</taxon>
        <taxon>Pseudomonadota</taxon>
        <taxon>Alphaproteobacteria</taxon>
        <taxon>Hyphomicrobiales</taxon>
        <taxon>Methylobacteriaceae</taxon>
        <taxon>Methylorubrum</taxon>
    </lineage>
</organism>
<accession>A9W4Q6</accession>
<protein>
    <recommendedName>
        <fullName evidence="1">Large ribosomal subunit protein uL22</fullName>
    </recommendedName>
    <alternativeName>
        <fullName evidence="2">50S ribosomal protein L22</fullName>
    </alternativeName>
</protein>
<dbReference type="EMBL" id="CP000908">
    <property type="protein sequence ID" value="ABY30562.1"/>
    <property type="molecule type" value="Genomic_DNA"/>
</dbReference>
<dbReference type="RefSeq" id="WP_003597100.1">
    <property type="nucleotide sequence ID" value="NC_010172.1"/>
</dbReference>
<dbReference type="SMR" id="A9W4Q6"/>
<dbReference type="GeneID" id="72989855"/>
<dbReference type="KEGG" id="mex:Mext_2167"/>
<dbReference type="eggNOG" id="COG0091">
    <property type="taxonomic scope" value="Bacteria"/>
</dbReference>
<dbReference type="HOGENOM" id="CLU_083987_3_0_5"/>
<dbReference type="BioCyc" id="MEXT419610:MEXT_RS10940-MONOMER"/>
<dbReference type="GO" id="GO:0022625">
    <property type="term" value="C:cytosolic large ribosomal subunit"/>
    <property type="evidence" value="ECO:0007669"/>
    <property type="project" value="TreeGrafter"/>
</dbReference>
<dbReference type="GO" id="GO:0019843">
    <property type="term" value="F:rRNA binding"/>
    <property type="evidence" value="ECO:0007669"/>
    <property type="project" value="UniProtKB-UniRule"/>
</dbReference>
<dbReference type="GO" id="GO:0003735">
    <property type="term" value="F:structural constituent of ribosome"/>
    <property type="evidence" value="ECO:0007669"/>
    <property type="project" value="InterPro"/>
</dbReference>
<dbReference type="GO" id="GO:0006412">
    <property type="term" value="P:translation"/>
    <property type="evidence" value="ECO:0007669"/>
    <property type="project" value="UniProtKB-UniRule"/>
</dbReference>
<dbReference type="CDD" id="cd00336">
    <property type="entry name" value="Ribosomal_L22"/>
    <property type="match status" value="1"/>
</dbReference>
<dbReference type="Gene3D" id="3.90.470.10">
    <property type="entry name" value="Ribosomal protein L22/L17"/>
    <property type="match status" value="1"/>
</dbReference>
<dbReference type="HAMAP" id="MF_01331_B">
    <property type="entry name" value="Ribosomal_uL22_B"/>
    <property type="match status" value="1"/>
</dbReference>
<dbReference type="InterPro" id="IPR001063">
    <property type="entry name" value="Ribosomal_uL22"/>
</dbReference>
<dbReference type="InterPro" id="IPR005727">
    <property type="entry name" value="Ribosomal_uL22_bac/chlpt-type"/>
</dbReference>
<dbReference type="InterPro" id="IPR047867">
    <property type="entry name" value="Ribosomal_uL22_bac/org-type"/>
</dbReference>
<dbReference type="InterPro" id="IPR018260">
    <property type="entry name" value="Ribosomal_uL22_CS"/>
</dbReference>
<dbReference type="InterPro" id="IPR036394">
    <property type="entry name" value="Ribosomal_uL22_sf"/>
</dbReference>
<dbReference type="NCBIfam" id="TIGR01044">
    <property type="entry name" value="rplV_bact"/>
    <property type="match status" value="1"/>
</dbReference>
<dbReference type="PANTHER" id="PTHR13501">
    <property type="entry name" value="CHLOROPLAST 50S RIBOSOMAL PROTEIN L22-RELATED"/>
    <property type="match status" value="1"/>
</dbReference>
<dbReference type="PANTHER" id="PTHR13501:SF8">
    <property type="entry name" value="LARGE RIBOSOMAL SUBUNIT PROTEIN UL22M"/>
    <property type="match status" value="1"/>
</dbReference>
<dbReference type="Pfam" id="PF00237">
    <property type="entry name" value="Ribosomal_L22"/>
    <property type="match status" value="1"/>
</dbReference>
<dbReference type="SUPFAM" id="SSF54843">
    <property type="entry name" value="Ribosomal protein L22"/>
    <property type="match status" value="1"/>
</dbReference>
<dbReference type="PROSITE" id="PS00464">
    <property type="entry name" value="RIBOSOMAL_L22"/>
    <property type="match status" value="1"/>
</dbReference>
<reference key="1">
    <citation type="submission" date="2007-12" db="EMBL/GenBank/DDBJ databases">
        <title>Complete sequence of Methylobacterium extorquens PA1.</title>
        <authorList>
            <consortium name="US DOE Joint Genome Institute"/>
            <person name="Copeland A."/>
            <person name="Lucas S."/>
            <person name="Lapidus A."/>
            <person name="Barry K."/>
            <person name="Glavina del Rio T."/>
            <person name="Dalin E."/>
            <person name="Tice H."/>
            <person name="Pitluck S."/>
            <person name="Saunders E."/>
            <person name="Brettin T."/>
            <person name="Bruce D."/>
            <person name="Detter J.C."/>
            <person name="Han C."/>
            <person name="Schmutz J."/>
            <person name="Larimer F."/>
            <person name="Land M."/>
            <person name="Hauser L."/>
            <person name="Kyrpides N."/>
            <person name="Kim E."/>
            <person name="Marx C."/>
            <person name="Richardson P."/>
        </authorList>
    </citation>
    <scope>NUCLEOTIDE SEQUENCE [LARGE SCALE GENOMIC DNA]</scope>
    <source>
        <strain>PA1</strain>
    </source>
</reference>
<gene>
    <name evidence="1" type="primary">rplV</name>
    <name type="ordered locus">Mext_2167</name>
</gene>
<feature type="chain" id="PRO_1000142281" description="Large ribosomal subunit protein uL22">
    <location>
        <begin position="1"/>
        <end position="127"/>
    </location>
</feature>
<keyword id="KW-0687">Ribonucleoprotein</keyword>
<keyword id="KW-0689">Ribosomal protein</keyword>
<keyword id="KW-0694">RNA-binding</keyword>
<keyword id="KW-0699">rRNA-binding</keyword>
<sequence>MGKPATPRALPENEAKAVARMLRVSPQKLNLVAALIRGKKVDTALADLEFSRKRIARDVKKCLESAIANAENNHDLDVDDLVVSQAFVGKALVLKRFHARARGRGARILKPFANLTIVVREVRAEAA</sequence>
<evidence type="ECO:0000255" key="1">
    <source>
        <dbReference type="HAMAP-Rule" id="MF_01331"/>
    </source>
</evidence>
<evidence type="ECO:0000305" key="2"/>
<comment type="function">
    <text evidence="1">This protein binds specifically to 23S rRNA; its binding is stimulated by other ribosomal proteins, e.g. L4, L17, and L20. It is important during the early stages of 50S assembly. It makes multiple contacts with different domains of the 23S rRNA in the assembled 50S subunit and ribosome (By similarity).</text>
</comment>
<comment type="function">
    <text evidence="1">The globular domain of the protein is located near the polypeptide exit tunnel on the outside of the subunit, while an extended beta-hairpin is found that lines the wall of the exit tunnel in the center of the 70S ribosome.</text>
</comment>
<comment type="subunit">
    <text evidence="1">Part of the 50S ribosomal subunit.</text>
</comment>
<comment type="similarity">
    <text evidence="1">Belongs to the universal ribosomal protein uL22 family.</text>
</comment>